<name>UPP_ALIFM</name>
<accession>B5FGY4</accession>
<dbReference type="EC" id="2.4.2.9" evidence="1"/>
<dbReference type="EMBL" id="CP001139">
    <property type="protein sequence ID" value="ACH67015.1"/>
    <property type="molecule type" value="Genomic_DNA"/>
</dbReference>
<dbReference type="RefSeq" id="WP_005420493.1">
    <property type="nucleotide sequence ID" value="NC_011184.1"/>
</dbReference>
<dbReference type="SMR" id="B5FGY4"/>
<dbReference type="GeneID" id="56273458"/>
<dbReference type="KEGG" id="vfm:VFMJ11_2062"/>
<dbReference type="HOGENOM" id="CLU_067096_2_2_6"/>
<dbReference type="UniPathway" id="UPA00574">
    <property type="reaction ID" value="UER00636"/>
</dbReference>
<dbReference type="Proteomes" id="UP000001857">
    <property type="component" value="Chromosome I"/>
</dbReference>
<dbReference type="GO" id="GO:0005525">
    <property type="term" value="F:GTP binding"/>
    <property type="evidence" value="ECO:0007669"/>
    <property type="project" value="UniProtKB-KW"/>
</dbReference>
<dbReference type="GO" id="GO:0000287">
    <property type="term" value="F:magnesium ion binding"/>
    <property type="evidence" value="ECO:0007669"/>
    <property type="project" value="UniProtKB-UniRule"/>
</dbReference>
<dbReference type="GO" id="GO:0004845">
    <property type="term" value="F:uracil phosphoribosyltransferase activity"/>
    <property type="evidence" value="ECO:0007669"/>
    <property type="project" value="UniProtKB-UniRule"/>
</dbReference>
<dbReference type="GO" id="GO:0044206">
    <property type="term" value="P:UMP salvage"/>
    <property type="evidence" value="ECO:0007669"/>
    <property type="project" value="UniProtKB-UniRule"/>
</dbReference>
<dbReference type="GO" id="GO:0006223">
    <property type="term" value="P:uracil salvage"/>
    <property type="evidence" value="ECO:0007669"/>
    <property type="project" value="InterPro"/>
</dbReference>
<dbReference type="CDD" id="cd06223">
    <property type="entry name" value="PRTases_typeI"/>
    <property type="match status" value="1"/>
</dbReference>
<dbReference type="FunFam" id="3.40.50.2020:FF:000003">
    <property type="entry name" value="Uracil phosphoribosyltransferase"/>
    <property type="match status" value="1"/>
</dbReference>
<dbReference type="Gene3D" id="3.40.50.2020">
    <property type="match status" value="1"/>
</dbReference>
<dbReference type="HAMAP" id="MF_01218_B">
    <property type="entry name" value="Upp_B"/>
    <property type="match status" value="1"/>
</dbReference>
<dbReference type="InterPro" id="IPR000836">
    <property type="entry name" value="PRibTrfase_dom"/>
</dbReference>
<dbReference type="InterPro" id="IPR029057">
    <property type="entry name" value="PRTase-like"/>
</dbReference>
<dbReference type="InterPro" id="IPR034332">
    <property type="entry name" value="Upp_B"/>
</dbReference>
<dbReference type="InterPro" id="IPR050054">
    <property type="entry name" value="UPRTase/APRTase"/>
</dbReference>
<dbReference type="InterPro" id="IPR005765">
    <property type="entry name" value="Ura_phspho_trans"/>
</dbReference>
<dbReference type="NCBIfam" id="NF001097">
    <property type="entry name" value="PRK00129.1"/>
    <property type="match status" value="1"/>
</dbReference>
<dbReference type="NCBIfam" id="TIGR01091">
    <property type="entry name" value="upp"/>
    <property type="match status" value="1"/>
</dbReference>
<dbReference type="PANTHER" id="PTHR32315">
    <property type="entry name" value="ADENINE PHOSPHORIBOSYLTRANSFERASE"/>
    <property type="match status" value="1"/>
</dbReference>
<dbReference type="PANTHER" id="PTHR32315:SF4">
    <property type="entry name" value="URACIL PHOSPHORIBOSYLTRANSFERASE, CHLOROPLASTIC"/>
    <property type="match status" value="1"/>
</dbReference>
<dbReference type="Pfam" id="PF14681">
    <property type="entry name" value="UPRTase"/>
    <property type="match status" value="1"/>
</dbReference>
<dbReference type="SUPFAM" id="SSF53271">
    <property type="entry name" value="PRTase-like"/>
    <property type="match status" value="1"/>
</dbReference>
<organism>
    <name type="scientific">Aliivibrio fischeri (strain MJ11)</name>
    <name type="common">Vibrio fischeri</name>
    <dbReference type="NCBI Taxonomy" id="388396"/>
    <lineage>
        <taxon>Bacteria</taxon>
        <taxon>Pseudomonadati</taxon>
        <taxon>Pseudomonadota</taxon>
        <taxon>Gammaproteobacteria</taxon>
        <taxon>Vibrionales</taxon>
        <taxon>Vibrionaceae</taxon>
        <taxon>Aliivibrio</taxon>
    </lineage>
</organism>
<proteinExistence type="inferred from homology"/>
<feature type="chain" id="PRO_1000139176" description="Uracil phosphoribosyltransferase">
    <location>
        <begin position="1"/>
        <end position="208"/>
    </location>
</feature>
<feature type="binding site" evidence="1">
    <location>
        <position position="78"/>
    </location>
    <ligand>
        <name>5-phospho-alpha-D-ribose 1-diphosphate</name>
        <dbReference type="ChEBI" id="CHEBI:58017"/>
    </ligand>
</feature>
<feature type="binding site" evidence="1">
    <location>
        <position position="103"/>
    </location>
    <ligand>
        <name>5-phospho-alpha-D-ribose 1-diphosphate</name>
        <dbReference type="ChEBI" id="CHEBI:58017"/>
    </ligand>
</feature>
<feature type="binding site" evidence="1">
    <location>
        <begin position="130"/>
        <end position="138"/>
    </location>
    <ligand>
        <name>5-phospho-alpha-D-ribose 1-diphosphate</name>
        <dbReference type="ChEBI" id="CHEBI:58017"/>
    </ligand>
</feature>
<feature type="binding site" evidence="1">
    <location>
        <position position="193"/>
    </location>
    <ligand>
        <name>uracil</name>
        <dbReference type="ChEBI" id="CHEBI:17568"/>
    </ligand>
</feature>
<feature type="binding site" evidence="1">
    <location>
        <begin position="198"/>
        <end position="200"/>
    </location>
    <ligand>
        <name>uracil</name>
        <dbReference type="ChEBI" id="CHEBI:17568"/>
    </ligand>
</feature>
<feature type="binding site" evidence="1">
    <location>
        <position position="199"/>
    </location>
    <ligand>
        <name>5-phospho-alpha-D-ribose 1-diphosphate</name>
        <dbReference type="ChEBI" id="CHEBI:58017"/>
    </ligand>
</feature>
<keyword id="KW-0021">Allosteric enzyme</keyword>
<keyword id="KW-0328">Glycosyltransferase</keyword>
<keyword id="KW-0342">GTP-binding</keyword>
<keyword id="KW-0460">Magnesium</keyword>
<keyword id="KW-0547">Nucleotide-binding</keyword>
<keyword id="KW-0808">Transferase</keyword>
<comment type="function">
    <text evidence="1">Catalyzes the conversion of uracil and 5-phospho-alpha-D-ribose 1-diphosphate (PRPP) to UMP and diphosphate.</text>
</comment>
<comment type="catalytic activity">
    <reaction evidence="1">
        <text>UMP + diphosphate = 5-phospho-alpha-D-ribose 1-diphosphate + uracil</text>
        <dbReference type="Rhea" id="RHEA:13017"/>
        <dbReference type="ChEBI" id="CHEBI:17568"/>
        <dbReference type="ChEBI" id="CHEBI:33019"/>
        <dbReference type="ChEBI" id="CHEBI:57865"/>
        <dbReference type="ChEBI" id="CHEBI:58017"/>
        <dbReference type="EC" id="2.4.2.9"/>
    </reaction>
</comment>
<comment type="cofactor">
    <cofactor evidence="1">
        <name>Mg(2+)</name>
        <dbReference type="ChEBI" id="CHEBI:18420"/>
    </cofactor>
    <text evidence="1">Binds 1 Mg(2+) ion per subunit. The magnesium is bound as Mg-PRPP.</text>
</comment>
<comment type="activity regulation">
    <text evidence="1">Allosterically activated by GTP.</text>
</comment>
<comment type="pathway">
    <text evidence="1">Pyrimidine metabolism; UMP biosynthesis via salvage pathway; UMP from uracil: step 1/1.</text>
</comment>
<comment type="similarity">
    <text evidence="1">Belongs to the UPRTase family.</text>
</comment>
<protein>
    <recommendedName>
        <fullName evidence="1">Uracil phosphoribosyltransferase</fullName>
        <ecNumber evidence="1">2.4.2.9</ecNumber>
    </recommendedName>
    <alternativeName>
        <fullName evidence="1">UMP pyrophosphorylase</fullName>
    </alternativeName>
    <alternativeName>
        <fullName evidence="1">UPRTase</fullName>
    </alternativeName>
</protein>
<sequence>MKVVEVKHPLIKHKIGLMREGEISTKRFRELATEVGSLLTYEATSDFETEKVTINGWNGPVEVDQIKGKKVTVVPILRAGLGMMDGVLEHIPSARISVVGIYRDEETLEPVPYFNKLASNIDERIALVVDPMLATGGSMIATLDLLKEKGCKHFKVLVLVAAPEGIEALEKAHPDVELYTAAIDEKLNDKGYIVPGLGDAGDKIFGTK</sequence>
<reference key="1">
    <citation type="submission" date="2008-08" db="EMBL/GenBank/DDBJ databases">
        <title>Complete sequence of Vibrio fischeri strain MJ11.</title>
        <authorList>
            <person name="Mandel M.J."/>
            <person name="Stabb E.V."/>
            <person name="Ruby E.G."/>
            <person name="Ferriera S."/>
            <person name="Johnson J."/>
            <person name="Kravitz S."/>
            <person name="Beeson K."/>
            <person name="Sutton G."/>
            <person name="Rogers Y.-H."/>
            <person name="Friedman R."/>
            <person name="Frazier M."/>
            <person name="Venter J.C."/>
        </authorList>
    </citation>
    <scope>NUCLEOTIDE SEQUENCE [LARGE SCALE GENOMIC DNA]</scope>
    <source>
        <strain>MJ11</strain>
    </source>
</reference>
<gene>
    <name evidence="1" type="primary">upp</name>
    <name type="ordered locus">VFMJ11_2062</name>
</gene>
<evidence type="ECO:0000255" key="1">
    <source>
        <dbReference type="HAMAP-Rule" id="MF_01218"/>
    </source>
</evidence>